<dbReference type="EC" id="2.4.2.18" evidence="1"/>
<dbReference type="EMBL" id="CP000437">
    <property type="protein sequence ID" value="ABI83618.1"/>
    <property type="status" value="ALT_INIT"/>
    <property type="molecule type" value="Genomic_DNA"/>
</dbReference>
<dbReference type="RefSeq" id="WP_015083964.1">
    <property type="nucleotide sequence ID" value="NC_017463.1"/>
</dbReference>
<dbReference type="SMR" id="Q0BJW6"/>
<dbReference type="KEGG" id="fth:FTH_1881"/>
<dbReference type="UniPathway" id="UPA00035">
    <property type="reaction ID" value="UER00041"/>
</dbReference>
<dbReference type="GO" id="GO:0005829">
    <property type="term" value="C:cytosol"/>
    <property type="evidence" value="ECO:0007669"/>
    <property type="project" value="TreeGrafter"/>
</dbReference>
<dbReference type="GO" id="GO:0004048">
    <property type="term" value="F:anthranilate phosphoribosyltransferase activity"/>
    <property type="evidence" value="ECO:0007669"/>
    <property type="project" value="UniProtKB-UniRule"/>
</dbReference>
<dbReference type="GO" id="GO:0000287">
    <property type="term" value="F:magnesium ion binding"/>
    <property type="evidence" value="ECO:0007669"/>
    <property type="project" value="UniProtKB-UniRule"/>
</dbReference>
<dbReference type="GO" id="GO:0000162">
    <property type="term" value="P:L-tryptophan biosynthetic process"/>
    <property type="evidence" value="ECO:0007669"/>
    <property type="project" value="UniProtKB-UniRule"/>
</dbReference>
<dbReference type="FunFam" id="3.40.1030.10:FF:000002">
    <property type="entry name" value="Anthranilate phosphoribosyltransferase"/>
    <property type="match status" value="1"/>
</dbReference>
<dbReference type="Gene3D" id="3.40.1030.10">
    <property type="entry name" value="Nucleoside phosphorylase/phosphoribosyltransferase catalytic domain"/>
    <property type="match status" value="1"/>
</dbReference>
<dbReference type="Gene3D" id="1.20.970.10">
    <property type="entry name" value="Transferase, Pyrimidine Nucleoside Phosphorylase, Chain C"/>
    <property type="match status" value="1"/>
</dbReference>
<dbReference type="HAMAP" id="MF_00211">
    <property type="entry name" value="TrpD"/>
    <property type="match status" value="1"/>
</dbReference>
<dbReference type="InterPro" id="IPR005940">
    <property type="entry name" value="Anthranilate_Pribosyl_Tfrase"/>
</dbReference>
<dbReference type="InterPro" id="IPR000312">
    <property type="entry name" value="Glycosyl_Trfase_fam3"/>
</dbReference>
<dbReference type="InterPro" id="IPR017459">
    <property type="entry name" value="Glycosyl_Trfase_fam3_N_dom"/>
</dbReference>
<dbReference type="InterPro" id="IPR036320">
    <property type="entry name" value="Glycosyl_Trfase_fam3_N_dom_sf"/>
</dbReference>
<dbReference type="InterPro" id="IPR035902">
    <property type="entry name" value="Nuc_phospho_transferase"/>
</dbReference>
<dbReference type="NCBIfam" id="TIGR01245">
    <property type="entry name" value="trpD"/>
    <property type="match status" value="1"/>
</dbReference>
<dbReference type="PANTHER" id="PTHR43285">
    <property type="entry name" value="ANTHRANILATE PHOSPHORIBOSYLTRANSFERASE"/>
    <property type="match status" value="1"/>
</dbReference>
<dbReference type="PANTHER" id="PTHR43285:SF2">
    <property type="entry name" value="ANTHRANILATE PHOSPHORIBOSYLTRANSFERASE"/>
    <property type="match status" value="1"/>
</dbReference>
<dbReference type="Pfam" id="PF02885">
    <property type="entry name" value="Glycos_trans_3N"/>
    <property type="match status" value="1"/>
</dbReference>
<dbReference type="Pfam" id="PF00591">
    <property type="entry name" value="Glycos_transf_3"/>
    <property type="match status" value="1"/>
</dbReference>
<dbReference type="SUPFAM" id="SSF52418">
    <property type="entry name" value="Nucleoside phosphorylase/phosphoribosyltransferase catalytic domain"/>
    <property type="match status" value="1"/>
</dbReference>
<dbReference type="SUPFAM" id="SSF47648">
    <property type="entry name" value="Nucleoside phosphorylase/phosphoribosyltransferase N-terminal domain"/>
    <property type="match status" value="1"/>
</dbReference>
<organism>
    <name type="scientific">Francisella tularensis subsp. holarctica (strain OSU18)</name>
    <dbReference type="NCBI Taxonomy" id="393011"/>
    <lineage>
        <taxon>Bacteria</taxon>
        <taxon>Pseudomonadati</taxon>
        <taxon>Pseudomonadota</taxon>
        <taxon>Gammaproteobacteria</taxon>
        <taxon>Thiotrichales</taxon>
        <taxon>Francisellaceae</taxon>
        <taxon>Francisella</taxon>
    </lineage>
</organism>
<keyword id="KW-0028">Amino-acid biosynthesis</keyword>
<keyword id="KW-0057">Aromatic amino acid biosynthesis</keyword>
<keyword id="KW-0328">Glycosyltransferase</keyword>
<keyword id="KW-0460">Magnesium</keyword>
<keyword id="KW-0479">Metal-binding</keyword>
<keyword id="KW-0808">Transferase</keyword>
<keyword id="KW-0822">Tryptophan biosynthesis</keyword>
<comment type="function">
    <text evidence="1">Catalyzes the transfer of the phosphoribosyl group of 5-phosphorylribose-1-pyrophosphate (PRPP) to anthranilate to yield N-(5'-phosphoribosyl)-anthranilate (PRA).</text>
</comment>
<comment type="catalytic activity">
    <reaction evidence="1">
        <text>N-(5-phospho-beta-D-ribosyl)anthranilate + diphosphate = 5-phospho-alpha-D-ribose 1-diphosphate + anthranilate</text>
        <dbReference type="Rhea" id="RHEA:11768"/>
        <dbReference type="ChEBI" id="CHEBI:16567"/>
        <dbReference type="ChEBI" id="CHEBI:18277"/>
        <dbReference type="ChEBI" id="CHEBI:33019"/>
        <dbReference type="ChEBI" id="CHEBI:58017"/>
        <dbReference type="EC" id="2.4.2.18"/>
    </reaction>
</comment>
<comment type="cofactor">
    <cofactor evidence="1">
        <name>Mg(2+)</name>
        <dbReference type="ChEBI" id="CHEBI:18420"/>
    </cofactor>
    <text evidence="1">Binds 2 magnesium ions per monomer.</text>
</comment>
<comment type="pathway">
    <text evidence="1">Amino-acid biosynthesis; L-tryptophan biosynthesis; L-tryptophan from chorismate: step 2/5.</text>
</comment>
<comment type="subunit">
    <text evidence="1">Homodimer.</text>
</comment>
<comment type="similarity">
    <text evidence="1">Belongs to the anthranilate phosphoribosyltransferase family.</text>
</comment>
<comment type="sequence caution" evidence="2">
    <conflict type="erroneous initiation">
        <sequence resource="EMBL-CDS" id="ABI83618"/>
    </conflict>
    <text>Extended N-terminus.</text>
</comment>
<sequence length="337" mass="37195">MISLKSIVDKLYNLEDLSYQESYQLFDYFIKGQIELPLQTSILIALKLKKETSIEIAAAVEALFDNTKEFPKIKGDLAGIVGTGGDGFNTINISTTAAIVAATAGYKVAKHGGRSVSSKSGSFDLLESFGVNIELAPDQTKQCLELYNLGFLFAPFYSDGFRHIKEARTILKTRTIFNILGPLINPARPNKVVIGVYSKDLILPMAKTLVNLGIDRAVVVYGSGLDEVAIHDDTYVAEIQNNQIIEYKVSPVDFGIYTYAIKDLEGGLPEQNREIIKQILLGKGKEAHNAAVAVNVAMLMRLYDKDDLKQNTQEVLEIIKSGKCFNTLQQVINYSNK</sequence>
<name>TRPD_FRATO</name>
<evidence type="ECO:0000255" key="1">
    <source>
        <dbReference type="HAMAP-Rule" id="MF_00211"/>
    </source>
</evidence>
<evidence type="ECO:0000305" key="2"/>
<reference key="1">
    <citation type="journal article" date="2006" name="J. Bacteriol.">
        <title>Chromosome rearrangement and diversification of Francisella tularensis revealed by the type B (OSU18) genome sequence.</title>
        <authorList>
            <person name="Petrosino J.F."/>
            <person name="Xiang Q."/>
            <person name="Karpathy S.E."/>
            <person name="Jiang H."/>
            <person name="Yerrapragada S."/>
            <person name="Liu Y."/>
            <person name="Gioia J."/>
            <person name="Hemphill L."/>
            <person name="Gonzalez A."/>
            <person name="Raghavan T.M."/>
            <person name="Uzman A."/>
            <person name="Fox G.E."/>
            <person name="Highlander S."/>
            <person name="Reichard M."/>
            <person name="Morton R.J."/>
            <person name="Clinkenbeard K.D."/>
            <person name="Weinstock G.M."/>
        </authorList>
    </citation>
    <scope>NUCLEOTIDE SEQUENCE [LARGE SCALE GENOMIC DNA]</scope>
    <source>
        <strain>OSU18</strain>
    </source>
</reference>
<proteinExistence type="inferred from homology"/>
<protein>
    <recommendedName>
        <fullName evidence="1">Anthranilate phosphoribosyltransferase</fullName>
        <ecNumber evidence="1">2.4.2.18</ecNumber>
    </recommendedName>
</protein>
<feature type="chain" id="PRO_0000325425" description="Anthranilate phosphoribosyltransferase">
    <location>
        <begin position="1"/>
        <end position="337"/>
    </location>
</feature>
<feature type="binding site" evidence="1">
    <location>
        <position position="82"/>
    </location>
    <ligand>
        <name>5-phospho-alpha-D-ribose 1-diphosphate</name>
        <dbReference type="ChEBI" id="CHEBI:58017"/>
    </ligand>
</feature>
<feature type="binding site" evidence="1">
    <location>
        <position position="82"/>
    </location>
    <ligand>
        <name>anthranilate</name>
        <dbReference type="ChEBI" id="CHEBI:16567"/>
        <label>1</label>
    </ligand>
</feature>
<feature type="binding site" evidence="1">
    <location>
        <begin position="85"/>
        <end position="86"/>
    </location>
    <ligand>
        <name>5-phospho-alpha-D-ribose 1-diphosphate</name>
        <dbReference type="ChEBI" id="CHEBI:58017"/>
    </ligand>
</feature>
<feature type="binding site" evidence="1">
    <location>
        <position position="90"/>
    </location>
    <ligand>
        <name>5-phospho-alpha-D-ribose 1-diphosphate</name>
        <dbReference type="ChEBI" id="CHEBI:58017"/>
    </ligand>
</feature>
<feature type="binding site" evidence="1">
    <location>
        <begin position="92"/>
        <end position="95"/>
    </location>
    <ligand>
        <name>5-phospho-alpha-D-ribose 1-diphosphate</name>
        <dbReference type="ChEBI" id="CHEBI:58017"/>
    </ligand>
</feature>
<feature type="binding site" evidence="1">
    <location>
        <position position="94"/>
    </location>
    <ligand>
        <name>Mg(2+)</name>
        <dbReference type="ChEBI" id="CHEBI:18420"/>
        <label>1</label>
    </ligand>
</feature>
<feature type="binding site" evidence="1">
    <location>
        <begin position="110"/>
        <end position="118"/>
    </location>
    <ligand>
        <name>5-phospho-alpha-D-ribose 1-diphosphate</name>
        <dbReference type="ChEBI" id="CHEBI:58017"/>
    </ligand>
</feature>
<feature type="binding site" evidence="1">
    <location>
        <position position="122"/>
    </location>
    <ligand>
        <name>5-phospho-alpha-D-ribose 1-diphosphate</name>
        <dbReference type="ChEBI" id="CHEBI:58017"/>
    </ligand>
</feature>
<feature type="binding site" evidence="1">
    <location>
        <position position="168"/>
    </location>
    <ligand>
        <name>anthranilate</name>
        <dbReference type="ChEBI" id="CHEBI:16567"/>
        <label>2</label>
    </ligand>
</feature>
<feature type="binding site" evidence="1">
    <location>
        <position position="226"/>
    </location>
    <ligand>
        <name>Mg(2+)</name>
        <dbReference type="ChEBI" id="CHEBI:18420"/>
        <label>2</label>
    </ligand>
</feature>
<feature type="binding site" evidence="1">
    <location>
        <position position="227"/>
    </location>
    <ligand>
        <name>Mg(2+)</name>
        <dbReference type="ChEBI" id="CHEBI:18420"/>
        <label>1</label>
    </ligand>
</feature>
<feature type="binding site" evidence="1">
    <location>
        <position position="227"/>
    </location>
    <ligand>
        <name>Mg(2+)</name>
        <dbReference type="ChEBI" id="CHEBI:18420"/>
        <label>2</label>
    </ligand>
</feature>
<accession>Q0BJW6</accession>
<gene>
    <name evidence="1" type="primary">trpD</name>
    <name type="ordered locus">FTH_1881</name>
</gene>